<reference key="1">
    <citation type="journal article" date="1994" name="J. Bacteriol.">
        <title>Bacillus subtilis F0F1 ATPase: DNA sequence of the atp operon and characterization of atp mutants.</title>
        <authorList>
            <person name="Santana M."/>
            <person name="Ionescu M.S."/>
            <person name="Vertes A."/>
            <person name="Longin R."/>
            <person name="Kunst F."/>
            <person name="Danchin A."/>
            <person name="Glaser P."/>
        </authorList>
    </citation>
    <scope>NUCLEOTIDE SEQUENCE [GENOMIC DNA]</scope>
    <source>
        <strain>168</strain>
    </source>
</reference>
<reference key="2">
    <citation type="journal article" date="1997" name="Nature">
        <title>The complete genome sequence of the Gram-positive bacterium Bacillus subtilis.</title>
        <authorList>
            <person name="Kunst F."/>
            <person name="Ogasawara N."/>
            <person name="Moszer I."/>
            <person name="Albertini A.M."/>
            <person name="Alloni G."/>
            <person name="Azevedo V."/>
            <person name="Bertero M.G."/>
            <person name="Bessieres P."/>
            <person name="Bolotin A."/>
            <person name="Borchert S."/>
            <person name="Borriss R."/>
            <person name="Boursier L."/>
            <person name="Brans A."/>
            <person name="Braun M."/>
            <person name="Brignell S.C."/>
            <person name="Bron S."/>
            <person name="Brouillet S."/>
            <person name="Bruschi C.V."/>
            <person name="Caldwell B."/>
            <person name="Capuano V."/>
            <person name="Carter N.M."/>
            <person name="Choi S.-K."/>
            <person name="Codani J.-J."/>
            <person name="Connerton I.F."/>
            <person name="Cummings N.J."/>
            <person name="Daniel R.A."/>
            <person name="Denizot F."/>
            <person name="Devine K.M."/>
            <person name="Duesterhoeft A."/>
            <person name="Ehrlich S.D."/>
            <person name="Emmerson P.T."/>
            <person name="Entian K.-D."/>
            <person name="Errington J."/>
            <person name="Fabret C."/>
            <person name="Ferrari E."/>
            <person name="Foulger D."/>
            <person name="Fritz C."/>
            <person name="Fujita M."/>
            <person name="Fujita Y."/>
            <person name="Fuma S."/>
            <person name="Galizzi A."/>
            <person name="Galleron N."/>
            <person name="Ghim S.-Y."/>
            <person name="Glaser P."/>
            <person name="Goffeau A."/>
            <person name="Golightly E.J."/>
            <person name="Grandi G."/>
            <person name="Guiseppi G."/>
            <person name="Guy B.J."/>
            <person name="Haga K."/>
            <person name="Haiech J."/>
            <person name="Harwood C.R."/>
            <person name="Henaut A."/>
            <person name="Hilbert H."/>
            <person name="Holsappel S."/>
            <person name="Hosono S."/>
            <person name="Hullo M.-F."/>
            <person name="Itaya M."/>
            <person name="Jones L.-M."/>
            <person name="Joris B."/>
            <person name="Karamata D."/>
            <person name="Kasahara Y."/>
            <person name="Klaerr-Blanchard M."/>
            <person name="Klein C."/>
            <person name="Kobayashi Y."/>
            <person name="Koetter P."/>
            <person name="Koningstein G."/>
            <person name="Krogh S."/>
            <person name="Kumano M."/>
            <person name="Kurita K."/>
            <person name="Lapidus A."/>
            <person name="Lardinois S."/>
            <person name="Lauber J."/>
            <person name="Lazarevic V."/>
            <person name="Lee S.-M."/>
            <person name="Levine A."/>
            <person name="Liu H."/>
            <person name="Masuda S."/>
            <person name="Mauel C."/>
            <person name="Medigue C."/>
            <person name="Medina N."/>
            <person name="Mellado R.P."/>
            <person name="Mizuno M."/>
            <person name="Moestl D."/>
            <person name="Nakai S."/>
            <person name="Noback M."/>
            <person name="Noone D."/>
            <person name="O'Reilly M."/>
            <person name="Ogawa K."/>
            <person name="Ogiwara A."/>
            <person name="Oudega B."/>
            <person name="Park S.-H."/>
            <person name="Parro V."/>
            <person name="Pohl T.M."/>
            <person name="Portetelle D."/>
            <person name="Porwollik S."/>
            <person name="Prescott A.M."/>
            <person name="Presecan E."/>
            <person name="Pujic P."/>
            <person name="Purnelle B."/>
            <person name="Rapoport G."/>
            <person name="Rey M."/>
            <person name="Reynolds S."/>
            <person name="Rieger M."/>
            <person name="Rivolta C."/>
            <person name="Rocha E."/>
            <person name="Roche B."/>
            <person name="Rose M."/>
            <person name="Sadaie Y."/>
            <person name="Sato T."/>
            <person name="Scanlan E."/>
            <person name="Schleich S."/>
            <person name="Schroeter R."/>
            <person name="Scoffone F."/>
            <person name="Sekiguchi J."/>
            <person name="Sekowska A."/>
            <person name="Seror S.J."/>
            <person name="Serror P."/>
            <person name="Shin B.-S."/>
            <person name="Soldo B."/>
            <person name="Sorokin A."/>
            <person name="Tacconi E."/>
            <person name="Takagi T."/>
            <person name="Takahashi H."/>
            <person name="Takemaru K."/>
            <person name="Takeuchi M."/>
            <person name="Tamakoshi A."/>
            <person name="Tanaka T."/>
            <person name="Terpstra P."/>
            <person name="Tognoni A."/>
            <person name="Tosato V."/>
            <person name="Uchiyama S."/>
            <person name="Vandenbol M."/>
            <person name="Vannier F."/>
            <person name="Vassarotti A."/>
            <person name="Viari A."/>
            <person name="Wambutt R."/>
            <person name="Wedler E."/>
            <person name="Wedler H."/>
            <person name="Weitzenegger T."/>
            <person name="Winters P."/>
            <person name="Wipat A."/>
            <person name="Yamamoto H."/>
            <person name="Yamane K."/>
            <person name="Yasumoto K."/>
            <person name="Yata K."/>
            <person name="Yoshida K."/>
            <person name="Yoshikawa H.-F."/>
            <person name="Zumstein E."/>
            <person name="Yoshikawa H."/>
            <person name="Danchin A."/>
        </authorList>
    </citation>
    <scope>NUCLEOTIDE SEQUENCE [LARGE SCALE GENOMIC DNA]</scope>
    <source>
        <strain>168</strain>
    </source>
</reference>
<reference key="3">
    <citation type="journal article" date="2009" name="J. Bacteriol.">
        <title>Bacillus subtilis SpoIIIJ and YqjG function in membrane protein biogenesis.</title>
        <authorList>
            <person name="Saller M.J."/>
            <person name="Fusetti F."/>
            <person name="Driessen A.J."/>
        </authorList>
    </citation>
    <scope>IDENTIFICATION BY MASS SPECTROMETRY</scope>
    <scope>INTERACTION WITH SPOIIIJ AND YQJG</scope>
    <source>
        <strain>168</strain>
    </source>
</reference>
<reference key="4">
    <citation type="journal article" date="2013" name="Mol. Microbiol.">
        <title>Flotillins functionally organize the bacterial membrane.</title>
        <authorList>
            <person name="Bach J.N."/>
            <person name="Bramkamp M."/>
        </authorList>
    </citation>
    <scope>INTERACTION WITH FLOT</scope>
    <scope>SUBCELLULAR LOCATION</scope>
    <source>
        <strain>168</strain>
    </source>
</reference>
<evidence type="ECO:0000255" key="1">
    <source>
        <dbReference type="HAMAP-Rule" id="MF_00815"/>
    </source>
</evidence>
<evidence type="ECO:0000269" key="2">
    <source>
    </source>
</evidence>
<evidence type="ECO:0000269" key="3">
    <source>
    </source>
</evidence>
<evidence type="ECO:0000305" key="4"/>
<dbReference type="EMBL" id="Z28592">
    <property type="protein sequence ID" value="CAA82259.1"/>
    <property type="status" value="ALT_INIT"/>
    <property type="molecule type" value="Genomic_DNA"/>
</dbReference>
<dbReference type="EMBL" id="AL009126">
    <property type="protein sequence ID" value="CAB15699.1"/>
    <property type="molecule type" value="Genomic_DNA"/>
</dbReference>
<dbReference type="PIR" id="C69592">
    <property type="entry name" value="C69592"/>
</dbReference>
<dbReference type="RefSeq" id="NP_391563.1">
    <property type="nucleotide sequence ID" value="NC_000964.3"/>
</dbReference>
<dbReference type="RefSeq" id="WP_003244388.1">
    <property type="nucleotide sequence ID" value="NZ_OZ025638.1"/>
</dbReference>
<dbReference type="SMR" id="P37810"/>
<dbReference type="FunCoup" id="P37810">
    <property type="interactions" value="704"/>
</dbReference>
<dbReference type="IntAct" id="P37810">
    <property type="interactions" value="2"/>
</dbReference>
<dbReference type="STRING" id="224308.BSU36820"/>
<dbReference type="jPOST" id="P37810"/>
<dbReference type="PaxDb" id="224308-BSU36820"/>
<dbReference type="EnsemblBacteria" id="CAB15699">
    <property type="protein sequence ID" value="CAB15699"/>
    <property type="gene ID" value="BSU_36820"/>
</dbReference>
<dbReference type="GeneID" id="936989"/>
<dbReference type="KEGG" id="bsu:BSU36820"/>
<dbReference type="PATRIC" id="fig|224308.179.peg.3988"/>
<dbReference type="eggNOG" id="COG0224">
    <property type="taxonomic scope" value="Bacteria"/>
</dbReference>
<dbReference type="InParanoid" id="P37810"/>
<dbReference type="OrthoDB" id="9812769at2"/>
<dbReference type="PhylomeDB" id="P37810"/>
<dbReference type="BioCyc" id="BSUB:BSU36820-MONOMER"/>
<dbReference type="SABIO-RK" id="P37810"/>
<dbReference type="Proteomes" id="UP000001570">
    <property type="component" value="Chromosome"/>
</dbReference>
<dbReference type="GO" id="GO:0045121">
    <property type="term" value="C:membrane raft"/>
    <property type="evidence" value="ECO:0007669"/>
    <property type="project" value="UniProtKB-SubCell"/>
</dbReference>
<dbReference type="GO" id="GO:0005886">
    <property type="term" value="C:plasma membrane"/>
    <property type="evidence" value="ECO:0007669"/>
    <property type="project" value="UniProtKB-SubCell"/>
</dbReference>
<dbReference type="GO" id="GO:0045259">
    <property type="term" value="C:proton-transporting ATP synthase complex"/>
    <property type="evidence" value="ECO:0007669"/>
    <property type="project" value="UniProtKB-KW"/>
</dbReference>
<dbReference type="GO" id="GO:0005524">
    <property type="term" value="F:ATP binding"/>
    <property type="evidence" value="ECO:0007669"/>
    <property type="project" value="UniProtKB-UniRule"/>
</dbReference>
<dbReference type="GO" id="GO:0046933">
    <property type="term" value="F:proton-transporting ATP synthase activity, rotational mechanism"/>
    <property type="evidence" value="ECO:0007669"/>
    <property type="project" value="UniProtKB-UniRule"/>
</dbReference>
<dbReference type="GO" id="GO:0015986">
    <property type="term" value="P:proton motive force-driven ATP synthesis"/>
    <property type="evidence" value="ECO:0000318"/>
    <property type="project" value="GO_Central"/>
</dbReference>
<dbReference type="GO" id="GO:0042777">
    <property type="term" value="P:proton motive force-driven plasma membrane ATP synthesis"/>
    <property type="evidence" value="ECO:0007669"/>
    <property type="project" value="UniProtKB-UniRule"/>
</dbReference>
<dbReference type="CDD" id="cd12151">
    <property type="entry name" value="F1-ATPase_gamma"/>
    <property type="match status" value="1"/>
</dbReference>
<dbReference type="FunFam" id="1.10.287.80:FF:000010">
    <property type="entry name" value="ATP synthase gamma chain"/>
    <property type="match status" value="1"/>
</dbReference>
<dbReference type="FunFam" id="3.40.1380.10:FF:000002">
    <property type="entry name" value="ATP synthase gamma chain"/>
    <property type="match status" value="1"/>
</dbReference>
<dbReference type="Gene3D" id="3.40.1380.10">
    <property type="match status" value="1"/>
</dbReference>
<dbReference type="Gene3D" id="1.10.287.80">
    <property type="entry name" value="ATP synthase, gamma subunit, helix hairpin domain"/>
    <property type="match status" value="2"/>
</dbReference>
<dbReference type="HAMAP" id="MF_00815">
    <property type="entry name" value="ATP_synth_gamma_bact"/>
    <property type="match status" value="1"/>
</dbReference>
<dbReference type="InterPro" id="IPR035968">
    <property type="entry name" value="ATP_synth_F1_ATPase_gsu"/>
</dbReference>
<dbReference type="InterPro" id="IPR000131">
    <property type="entry name" value="ATP_synth_F1_gsu"/>
</dbReference>
<dbReference type="InterPro" id="IPR023632">
    <property type="entry name" value="ATP_synth_F1_gsu_CS"/>
</dbReference>
<dbReference type="NCBIfam" id="TIGR01146">
    <property type="entry name" value="ATPsyn_F1gamma"/>
    <property type="match status" value="1"/>
</dbReference>
<dbReference type="PANTHER" id="PTHR11693">
    <property type="entry name" value="ATP SYNTHASE GAMMA CHAIN"/>
    <property type="match status" value="1"/>
</dbReference>
<dbReference type="PANTHER" id="PTHR11693:SF22">
    <property type="entry name" value="ATP SYNTHASE SUBUNIT GAMMA, MITOCHONDRIAL"/>
    <property type="match status" value="1"/>
</dbReference>
<dbReference type="Pfam" id="PF00231">
    <property type="entry name" value="ATP-synt"/>
    <property type="match status" value="1"/>
</dbReference>
<dbReference type="PRINTS" id="PR00126">
    <property type="entry name" value="ATPASEGAMMA"/>
</dbReference>
<dbReference type="SUPFAM" id="SSF52943">
    <property type="entry name" value="ATP synthase (F1-ATPase), gamma subunit"/>
    <property type="match status" value="1"/>
</dbReference>
<dbReference type="PROSITE" id="PS00153">
    <property type="entry name" value="ATPASE_GAMMA"/>
    <property type="match status" value="1"/>
</dbReference>
<feature type="chain" id="PRO_0000073234" description="ATP synthase gamma chain">
    <location>
        <begin position="1"/>
        <end position="287"/>
    </location>
</feature>
<gene>
    <name evidence="1" type="primary">atpG</name>
    <name type="ordered locus">BSU36820</name>
</gene>
<proteinExistence type="evidence at protein level"/>
<organism>
    <name type="scientific">Bacillus subtilis (strain 168)</name>
    <dbReference type="NCBI Taxonomy" id="224308"/>
    <lineage>
        <taxon>Bacteria</taxon>
        <taxon>Bacillati</taxon>
        <taxon>Bacillota</taxon>
        <taxon>Bacilli</taxon>
        <taxon>Bacillales</taxon>
        <taxon>Bacillaceae</taxon>
        <taxon>Bacillus</taxon>
    </lineage>
</organism>
<name>ATPG_BACSU</name>
<keyword id="KW-0066">ATP synthesis</keyword>
<keyword id="KW-1003">Cell membrane</keyword>
<keyword id="KW-0139">CF(1)</keyword>
<keyword id="KW-0375">Hydrogen ion transport</keyword>
<keyword id="KW-0406">Ion transport</keyword>
<keyword id="KW-0472">Membrane</keyword>
<keyword id="KW-1185">Reference proteome</keyword>
<keyword id="KW-0813">Transport</keyword>
<sequence>MASLRDIKSRITSTKKTSQITKAMQMVSAAKLNRAENNAKSFVPYMDKIQEVVSNVGRVSGNVKHPMLLSREVKKTAYLVITSDRGLAGAFNSSVLRSAYQAMQERHQSKDEYAVIAIGRVGRDFFKKREIPIISELTGLGDEVTFTEIKDLARQTIQMFIDGAFDELHLVYNHFVSAITQEVTEKKLLPLSDLGSGGGKRTASYEFEPSEEEVLEVLLPQYAESLIFGALLDSKASEHAARMTAMKNATDNAKELIDSLSLSYNRARQAAITQEITEIVGGAAALE</sequence>
<accession>P37810</accession>
<accession>O32279</accession>
<protein>
    <recommendedName>
        <fullName evidence="1">ATP synthase gamma chain</fullName>
    </recommendedName>
    <alternativeName>
        <fullName evidence="1">ATP synthase F1 sector gamma subunit</fullName>
    </alternativeName>
    <alternativeName>
        <fullName evidence="1">F-ATPase gamma subunit</fullName>
    </alternativeName>
</protein>
<comment type="function">
    <text>Produces ATP from ADP in the presence of a proton gradient across the membrane. The gamma chain is believed to be important in regulating ATPase activity and the flow of protons through the CF(0) complex.</text>
</comment>
<comment type="subunit">
    <text evidence="1 2 3 4">F-type ATPases have 2 components, CF(1) - the catalytic core - and CF(0) - the membrane proton channel. CF(1) has five subunits: alpha(3), beta(3), gamma(1), delta(1), epsilon(1). CF(0) has three main subunits: a, b and c (Probable). The F(1)F(0) complex interacts with SpoIIIJ and YqjG; YqgA is found in the same complex (By similarity) (PubMed:19717609). Interacts with FloT (PubMed:23651456).</text>
</comment>
<comment type="subcellular location">
    <subcellularLocation>
        <location evidence="1 3">Cell membrane</location>
        <topology evidence="1">Peripheral membrane protein</topology>
    </subcellularLocation>
    <subcellularLocation>
        <location evidence="3">Membrane raft</location>
        <topology>Peripheral membrane protein</topology>
    </subcellularLocation>
    <text evidence="3">Present in detergent-resistant membrane (DRM) fractions that may be equivalent to eukaryotic membrane rafts; these rafts include proteins involved in signaling, molecule trafficking and protein secretion.</text>
</comment>
<comment type="similarity">
    <text evidence="1">Belongs to the ATPase gamma chain family.</text>
</comment>
<comment type="sequence caution" evidence="4">
    <conflict type="erroneous initiation">
        <sequence resource="EMBL-CDS" id="CAA82259"/>
    </conflict>
    <text>Extended N-terminus.</text>
</comment>